<comment type="function">
    <text evidence="1">Participates actively in the response to hyperosmotic and heat shock by preventing the aggregation of stress-denatured proteins, in association with DnaK and GrpE. It is the nucleotide exchange factor for DnaK and may function as a thermosensor. Unfolded proteins bind initially to DnaJ; upon interaction with the DnaJ-bound protein, DnaK hydrolyzes its bound ATP, resulting in the formation of a stable complex. GrpE releases ADP from DnaK; ATP binding to DnaK triggers the release of the substrate protein, thus completing the reaction cycle. Several rounds of ATP-dependent interactions between DnaJ, DnaK and GrpE are required for fully efficient folding.</text>
</comment>
<comment type="subunit">
    <text evidence="1">Homodimer.</text>
</comment>
<comment type="subcellular location">
    <subcellularLocation>
        <location evidence="1">Cytoplasm</location>
    </subcellularLocation>
</comment>
<comment type="similarity">
    <text evidence="1">Belongs to the GrpE family.</text>
</comment>
<protein>
    <recommendedName>
        <fullName evidence="1">Protein GrpE</fullName>
    </recommendedName>
    <alternativeName>
        <fullName evidence="1">HSP-70 cofactor</fullName>
    </alternativeName>
</protein>
<gene>
    <name evidence="1" type="primary">grpE</name>
    <name type="ordered locus">CFF8240_1090</name>
</gene>
<name>GRPE_CAMFF</name>
<evidence type="ECO:0000255" key="1">
    <source>
        <dbReference type="HAMAP-Rule" id="MF_01151"/>
    </source>
</evidence>
<sequence>MSEDTNKNENVDNIPDNFDDNVSFTKLNEDVKDELALAKESLMRATADFENIKKRLEREKGEAVKFANESFARDLLPVIDALEIASNLQSGDDEIANKIKDGINLTIEQFKKCFEKYGIKEIRTDAEFNPEFHNAINYIESDEVESGKIAAVYQKGYLYNDRVLRPSMVVIAK</sequence>
<accession>A0RPW8</accession>
<feature type="chain" id="PRO_1000053564" description="Protein GrpE">
    <location>
        <begin position="1"/>
        <end position="173"/>
    </location>
</feature>
<proteinExistence type="inferred from homology"/>
<reference key="1">
    <citation type="submission" date="2006-11" db="EMBL/GenBank/DDBJ databases">
        <title>Sequence of Campylobacter fetus subsp. fetus 82-40.</title>
        <authorList>
            <person name="Fouts D.E."/>
            <person name="Nelson K.E."/>
        </authorList>
    </citation>
    <scope>NUCLEOTIDE SEQUENCE [LARGE SCALE GENOMIC DNA]</scope>
    <source>
        <strain>82-40</strain>
    </source>
</reference>
<organism>
    <name type="scientific">Campylobacter fetus subsp. fetus (strain 82-40)</name>
    <dbReference type="NCBI Taxonomy" id="360106"/>
    <lineage>
        <taxon>Bacteria</taxon>
        <taxon>Pseudomonadati</taxon>
        <taxon>Campylobacterota</taxon>
        <taxon>Epsilonproteobacteria</taxon>
        <taxon>Campylobacterales</taxon>
        <taxon>Campylobacteraceae</taxon>
        <taxon>Campylobacter</taxon>
    </lineage>
</organism>
<dbReference type="EMBL" id="CP000487">
    <property type="protein sequence ID" value="ABK82647.1"/>
    <property type="molecule type" value="Genomic_DNA"/>
</dbReference>
<dbReference type="RefSeq" id="WP_011732078.1">
    <property type="nucleotide sequence ID" value="NC_008599.1"/>
</dbReference>
<dbReference type="SMR" id="A0RPW8"/>
<dbReference type="KEGG" id="cff:CFF8240_1090"/>
<dbReference type="PATRIC" id="fig|360106.6.peg.1062"/>
<dbReference type="eggNOG" id="COG0576">
    <property type="taxonomic scope" value="Bacteria"/>
</dbReference>
<dbReference type="HOGENOM" id="CLU_057217_6_3_7"/>
<dbReference type="Proteomes" id="UP000000760">
    <property type="component" value="Chromosome"/>
</dbReference>
<dbReference type="GO" id="GO:0005829">
    <property type="term" value="C:cytosol"/>
    <property type="evidence" value="ECO:0007669"/>
    <property type="project" value="TreeGrafter"/>
</dbReference>
<dbReference type="GO" id="GO:0000774">
    <property type="term" value="F:adenyl-nucleotide exchange factor activity"/>
    <property type="evidence" value="ECO:0007669"/>
    <property type="project" value="InterPro"/>
</dbReference>
<dbReference type="GO" id="GO:0042803">
    <property type="term" value="F:protein homodimerization activity"/>
    <property type="evidence" value="ECO:0007669"/>
    <property type="project" value="InterPro"/>
</dbReference>
<dbReference type="GO" id="GO:0051087">
    <property type="term" value="F:protein-folding chaperone binding"/>
    <property type="evidence" value="ECO:0007669"/>
    <property type="project" value="InterPro"/>
</dbReference>
<dbReference type="GO" id="GO:0051082">
    <property type="term" value="F:unfolded protein binding"/>
    <property type="evidence" value="ECO:0007669"/>
    <property type="project" value="TreeGrafter"/>
</dbReference>
<dbReference type="GO" id="GO:0006457">
    <property type="term" value="P:protein folding"/>
    <property type="evidence" value="ECO:0007669"/>
    <property type="project" value="InterPro"/>
</dbReference>
<dbReference type="CDD" id="cd00446">
    <property type="entry name" value="GrpE"/>
    <property type="match status" value="1"/>
</dbReference>
<dbReference type="FunFam" id="2.30.22.10:FF:000001">
    <property type="entry name" value="Protein GrpE"/>
    <property type="match status" value="1"/>
</dbReference>
<dbReference type="Gene3D" id="3.90.20.20">
    <property type="match status" value="1"/>
</dbReference>
<dbReference type="Gene3D" id="2.30.22.10">
    <property type="entry name" value="Head domain of nucleotide exchange factor GrpE"/>
    <property type="match status" value="1"/>
</dbReference>
<dbReference type="HAMAP" id="MF_01151">
    <property type="entry name" value="GrpE"/>
    <property type="match status" value="1"/>
</dbReference>
<dbReference type="InterPro" id="IPR000740">
    <property type="entry name" value="GrpE"/>
</dbReference>
<dbReference type="InterPro" id="IPR013805">
    <property type="entry name" value="GrpE_coiled_coil"/>
</dbReference>
<dbReference type="InterPro" id="IPR009012">
    <property type="entry name" value="GrpE_head"/>
</dbReference>
<dbReference type="PANTHER" id="PTHR21237">
    <property type="entry name" value="GRPE PROTEIN"/>
    <property type="match status" value="1"/>
</dbReference>
<dbReference type="PANTHER" id="PTHR21237:SF23">
    <property type="entry name" value="GRPE PROTEIN HOMOLOG, MITOCHONDRIAL"/>
    <property type="match status" value="1"/>
</dbReference>
<dbReference type="Pfam" id="PF01025">
    <property type="entry name" value="GrpE"/>
    <property type="match status" value="1"/>
</dbReference>
<dbReference type="PRINTS" id="PR00773">
    <property type="entry name" value="GRPEPROTEIN"/>
</dbReference>
<dbReference type="SUPFAM" id="SSF58014">
    <property type="entry name" value="Coiled-coil domain of nucleotide exchange factor GrpE"/>
    <property type="match status" value="1"/>
</dbReference>
<dbReference type="SUPFAM" id="SSF51064">
    <property type="entry name" value="Head domain of nucleotide exchange factor GrpE"/>
    <property type="match status" value="1"/>
</dbReference>
<dbReference type="PROSITE" id="PS01071">
    <property type="entry name" value="GRPE"/>
    <property type="match status" value="1"/>
</dbReference>
<keyword id="KW-0143">Chaperone</keyword>
<keyword id="KW-0963">Cytoplasm</keyword>
<keyword id="KW-0346">Stress response</keyword>